<reference key="1">
    <citation type="journal article" date="2004" name="Proc. Natl. Acad. Sci. U.S.A.">
        <title>Complete genomes of two clinical Staphylococcus aureus strains: evidence for the rapid evolution of virulence and drug resistance.</title>
        <authorList>
            <person name="Holden M.T.G."/>
            <person name="Feil E.J."/>
            <person name="Lindsay J.A."/>
            <person name="Peacock S.J."/>
            <person name="Day N.P.J."/>
            <person name="Enright M.C."/>
            <person name="Foster T.J."/>
            <person name="Moore C.E."/>
            <person name="Hurst L."/>
            <person name="Atkin R."/>
            <person name="Barron A."/>
            <person name="Bason N."/>
            <person name="Bentley S.D."/>
            <person name="Chillingworth C."/>
            <person name="Chillingworth T."/>
            <person name="Churcher C."/>
            <person name="Clark L."/>
            <person name="Corton C."/>
            <person name="Cronin A."/>
            <person name="Doggett J."/>
            <person name="Dowd L."/>
            <person name="Feltwell T."/>
            <person name="Hance Z."/>
            <person name="Harris B."/>
            <person name="Hauser H."/>
            <person name="Holroyd S."/>
            <person name="Jagels K."/>
            <person name="James K.D."/>
            <person name="Lennard N."/>
            <person name="Line A."/>
            <person name="Mayes R."/>
            <person name="Moule S."/>
            <person name="Mungall K."/>
            <person name="Ormond D."/>
            <person name="Quail M.A."/>
            <person name="Rabbinowitsch E."/>
            <person name="Rutherford K.M."/>
            <person name="Sanders M."/>
            <person name="Sharp S."/>
            <person name="Simmonds M."/>
            <person name="Stevens K."/>
            <person name="Whitehead S."/>
            <person name="Barrell B.G."/>
            <person name="Spratt B.G."/>
            <person name="Parkhill J."/>
        </authorList>
    </citation>
    <scope>NUCLEOTIDE SEQUENCE [LARGE SCALE GENOMIC DNA]</scope>
    <source>
        <strain>MSSA476</strain>
    </source>
</reference>
<gene>
    <name type="ordered locus">SAS0955</name>
</gene>
<dbReference type="EC" id="3.4.21.-"/>
<dbReference type="EMBL" id="BX571857">
    <property type="protein sequence ID" value="CAG42731.1"/>
    <property type="molecule type" value="Genomic_DNA"/>
</dbReference>
<dbReference type="SMR" id="Q6GAJ1"/>
<dbReference type="KEGG" id="sas:SAS0955"/>
<dbReference type="HOGENOM" id="CLU_027421_0_0_9"/>
<dbReference type="GO" id="GO:0005886">
    <property type="term" value="C:plasma membrane"/>
    <property type="evidence" value="ECO:0007669"/>
    <property type="project" value="UniProtKB-SubCell"/>
</dbReference>
<dbReference type="GO" id="GO:0004252">
    <property type="term" value="F:serine-type endopeptidase activity"/>
    <property type="evidence" value="ECO:0007669"/>
    <property type="project" value="InterPro"/>
</dbReference>
<dbReference type="GO" id="GO:0006508">
    <property type="term" value="P:proteolysis"/>
    <property type="evidence" value="ECO:0007669"/>
    <property type="project" value="UniProtKB-KW"/>
</dbReference>
<dbReference type="CDD" id="cd06781">
    <property type="entry name" value="cpPDZ_BsHtra-like"/>
    <property type="match status" value="1"/>
</dbReference>
<dbReference type="Gene3D" id="2.30.42.10">
    <property type="match status" value="1"/>
</dbReference>
<dbReference type="Gene3D" id="2.40.10.10">
    <property type="entry name" value="Trypsin-like serine proteases"/>
    <property type="match status" value="2"/>
</dbReference>
<dbReference type="InterPro" id="IPR051201">
    <property type="entry name" value="Chloro_Bact_Ser_Proteases"/>
</dbReference>
<dbReference type="InterPro" id="IPR001478">
    <property type="entry name" value="PDZ"/>
</dbReference>
<dbReference type="InterPro" id="IPR036034">
    <property type="entry name" value="PDZ_sf"/>
</dbReference>
<dbReference type="InterPro" id="IPR009003">
    <property type="entry name" value="Peptidase_S1_PA"/>
</dbReference>
<dbReference type="InterPro" id="IPR043504">
    <property type="entry name" value="Peptidase_S1_PA_chymotrypsin"/>
</dbReference>
<dbReference type="InterPro" id="IPR001940">
    <property type="entry name" value="Peptidase_S1C"/>
</dbReference>
<dbReference type="PANTHER" id="PTHR43343">
    <property type="entry name" value="PEPTIDASE S12"/>
    <property type="match status" value="1"/>
</dbReference>
<dbReference type="PANTHER" id="PTHR43343:SF3">
    <property type="entry name" value="PROTEASE DO-LIKE 8, CHLOROPLASTIC"/>
    <property type="match status" value="1"/>
</dbReference>
<dbReference type="Pfam" id="PF13180">
    <property type="entry name" value="PDZ_2"/>
    <property type="match status" value="1"/>
</dbReference>
<dbReference type="Pfam" id="PF13365">
    <property type="entry name" value="Trypsin_2"/>
    <property type="match status" value="1"/>
</dbReference>
<dbReference type="PRINTS" id="PR00834">
    <property type="entry name" value="PROTEASES2C"/>
</dbReference>
<dbReference type="SMART" id="SM00228">
    <property type="entry name" value="PDZ"/>
    <property type="match status" value="1"/>
</dbReference>
<dbReference type="SUPFAM" id="SSF50156">
    <property type="entry name" value="PDZ domain-like"/>
    <property type="match status" value="1"/>
</dbReference>
<dbReference type="SUPFAM" id="SSF50494">
    <property type="entry name" value="Trypsin-like serine proteases"/>
    <property type="match status" value="1"/>
</dbReference>
<feature type="chain" id="PRO_0000252469" description="Serine protease HtrA-like">
    <location>
        <begin position="1"/>
        <end position="769"/>
    </location>
</feature>
<feature type="transmembrane region" description="Helical" evidence="1">
    <location>
        <begin position="410"/>
        <end position="430"/>
    </location>
</feature>
<feature type="domain" description="PDZ">
    <location>
        <begin position="680"/>
        <end position="733"/>
    </location>
</feature>
<feature type="region of interest" description="Disordered" evidence="2">
    <location>
        <begin position="1"/>
        <end position="390"/>
    </location>
</feature>
<feature type="compositionally biased region" description="Basic residues" evidence="2">
    <location>
        <begin position="1"/>
        <end position="20"/>
    </location>
</feature>
<feature type="compositionally biased region" description="Basic and acidic residues" evidence="2">
    <location>
        <begin position="21"/>
        <end position="64"/>
    </location>
</feature>
<feature type="compositionally biased region" description="Basic and acidic residues" evidence="2">
    <location>
        <begin position="71"/>
        <end position="108"/>
    </location>
</feature>
<feature type="compositionally biased region" description="Polar residues" evidence="2">
    <location>
        <begin position="126"/>
        <end position="137"/>
    </location>
</feature>
<feature type="compositionally biased region" description="Basic and acidic residues" evidence="2">
    <location>
        <begin position="138"/>
        <end position="186"/>
    </location>
</feature>
<feature type="compositionally biased region" description="Polar residues" evidence="2">
    <location>
        <begin position="247"/>
        <end position="262"/>
    </location>
</feature>
<feature type="compositionally biased region" description="Basic and acidic residues" evidence="2">
    <location>
        <begin position="264"/>
        <end position="296"/>
    </location>
</feature>
<feature type="compositionally biased region" description="Basic and acidic residues" evidence="2">
    <location>
        <begin position="310"/>
        <end position="330"/>
    </location>
</feature>
<feature type="compositionally biased region" description="Polar residues" evidence="2">
    <location>
        <begin position="331"/>
        <end position="347"/>
    </location>
</feature>
<feature type="compositionally biased region" description="Basic and acidic residues" evidence="2">
    <location>
        <begin position="348"/>
        <end position="364"/>
    </location>
</feature>
<feature type="compositionally biased region" description="Polar residues" evidence="2">
    <location>
        <begin position="366"/>
        <end position="390"/>
    </location>
</feature>
<feature type="active site" description="Charge relay system" evidence="1">
    <location>
        <position position="504"/>
    </location>
</feature>
<feature type="active site" description="Charge relay system" evidence="1">
    <location>
        <position position="534"/>
    </location>
</feature>
<feature type="active site" description="Charge relay system" evidence="1">
    <location>
        <position position="619"/>
    </location>
</feature>
<proteinExistence type="inferred from homology"/>
<protein>
    <recommendedName>
        <fullName>Serine protease HtrA-like</fullName>
        <ecNumber>3.4.21.-</ecNumber>
    </recommendedName>
</protein>
<evidence type="ECO:0000255" key="1"/>
<evidence type="ECO:0000256" key="2">
    <source>
        <dbReference type="SAM" id="MobiDB-lite"/>
    </source>
</evidence>
<evidence type="ECO:0000305" key="3"/>
<sequence>MDIGKKHVIPKSQYRRKRREFFHNEDREENLNQHQDKQNIDNTTSKKADKQIHKDSIDKHERFKNSLSSHLEQRNRDVNENKAEESKSNQDSKSAYNRDHYLTDDVSKKQNSLDSVDQDTEKSKYYEQNSEATLSTKSTDKVESTDMRKLSSDKNKVGHEEQHVLSKPSEHDKETRIDFESSRTDSDSSMQTEKIKKDSSDGNKSSNLKSEVISDKSNTVPKLSESDDEVNNQKPLTLPEEQKLKRQQSQNEQTKTYTYGDSEQNDKSNYENDLSHHMPSISDDKDNVMRENHIVDDNPDNDINTPSLSKTDDDRKLDEKIHVEDKHKQNADSSETVGYQSQSSASHRITEKRNNAINDHDKLNGQKPNAKTSANNNQKKATSKLNKGRATNNNYSDILKKFWMMYWPKLVILMGIIILIVILNAIFNNVNKNDRMNDNNDADAQKYTTTMKNANNTVKSVVTVENETSKDSSLPKDKASQDEVGSGVVYKKSGDTLYIVTNAHVVGDKENQKITFSNNKSVVGKVLGKDKWSDLAVVKATSSDSSVKEIAIGDSNNLVLGEPILVVGNPLGVDFKGTVTEGIISGLNRNVPIDFDKDNKYDMLMKAFQIDASVNPGNSGGAVVNREGKLIGVVAAKISMPNVENMSFAIPVNEVQKIVKDLETKGKIDYPDVGVKMKNIASLNSFERQAVKLPGKVKNGVVVDQVDNNGLADQSGLKKGDVITELDGKLLEDDLRFRQIIFSHKDDLKSITAKIYRDGKEKEINIKLK</sequence>
<accession>Q6GAJ1</accession>
<keyword id="KW-1003">Cell membrane</keyword>
<keyword id="KW-0378">Hydrolase</keyword>
<keyword id="KW-0472">Membrane</keyword>
<keyword id="KW-0645">Protease</keyword>
<keyword id="KW-0720">Serine protease</keyword>
<keyword id="KW-0812">Transmembrane</keyword>
<keyword id="KW-1133">Transmembrane helix</keyword>
<organism>
    <name type="scientific">Staphylococcus aureus (strain MSSA476)</name>
    <dbReference type="NCBI Taxonomy" id="282459"/>
    <lineage>
        <taxon>Bacteria</taxon>
        <taxon>Bacillati</taxon>
        <taxon>Bacillota</taxon>
        <taxon>Bacilli</taxon>
        <taxon>Bacillales</taxon>
        <taxon>Staphylococcaceae</taxon>
        <taxon>Staphylococcus</taxon>
    </lineage>
</organism>
<name>HTRAL_STAAS</name>
<comment type="subcellular location">
    <subcellularLocation>
        <location evidence="3">Cell membrane</location>
        <topology evidence="3">Single-pass membrane protein</topology>
    </subcellularLocation>
</comment>
<comment type="similarity">
    <text evidence="3">Belongs to the peptidase S1C family.</text>
</comment>